<dbReference type="EMBL" id="CP000647">
    <property type="protein sequence ID" value="ABR80159.1"/>
    <property type="molecule type" value="Genomic_DNA"/>
</dbReference>
<dbReference type="RefSeq" id="WP_002887631.1">
    <property type="nucleotide sequence ID" value="NC_009648.1"/>
</dbReference>
<dbReference type="STRING" id="272620.KPN_04813"/>
<dbReference type="PaxDb" id="272620-KPN_04813"/>
<dbReference type="EnsemblBacteria" id="ABR80159">
    <property type="protein sequence ID" value="ABR80159"/>
    <property type="gene ID" value="KPN_04813"/>
</dbReference>
<dbReference type="KEGG" id="kpn:KPN_04813"/>
<dbReference type="HOGENOM" id="CLU_117642_1_0_6"/>
<dbReference type="Proteomes" id="UP000000265">
    <property type="component" value="Chromosome"/>
</dbReference>
<dbReference type="GO" id="GO:0005886">
    <property type="term" value="C:plasma membrane"/>
    <property type="evidence" value="ECO:0007669"/>
    <property type="project" value="UniProtKB-SubCell"/>
</dbReference>
<dbReference type="GO" id="GO:0015744">
    <property type="term" value="P:succinate transport"/>
    <property type="evidence" value="ECO:0007669"/>
    <property type="project" value="UniProtKB-UniRule"/>
</dbReference>
<dbReference type="HAMAP" id="MF_01191">
    <property type="entry name" value="YjjB"/>
    <property type="match status" value="1"/>
</dbReference>
<dbReference type="InterPro" id="IPR024528">
    <property type="entry name" value="ThrE_2"/>
</dbReference>
<dbReference type="InterPro" id="IPR050539">
    <property type="entry name" value="ThrE_Dicarb/AminoAcid_Exp"/>
</dbReference>
<dbReference type="InterPro" id="IPR020914">
    <property type="entry name" value="YjjB"/>
</dbReference>
<dbReference type="NCBIfam" id="NF007391">
    <property type="entry name" value="PRK09917.1"/>
    <property type="match status" value="1"/>
</dbReference>
<dbReference type="PANTHER" id="PTHR34390:SF1">
    <property type="entry name" value="SUCCINATE TRANSPORTER SUBUNIT YJJB-RELATED"/>
    <property type="match status" value="1"/>
</dbReference>
<dbReference type="PANTHER" id="PTHR34390">
    <property type="entry name" value="UPF0442 PROTEIN YJJB-RELATED"/>
    <property type="match status" value="1"/>
</dbReference>
<dbReference type="Pfam" id="PF12821">
    <property type="entry name" value="ThrE_2"/>
    <property type="match status" value="1"/>
</dbReference>
<evidence type="ECO:0000255" key="1">
    <source>
        <dbReference type="HAMAP-Rule" id="MF_01191"/>
    </source>
</evidence>
<keyword id="KW-0997">Cell inner membrane</keyword>
<keyword id="KW-1003">Cell membrane</keyword>
<keyword id="KW-0472">Membrane</keyword>
<keyword id="KW-0812">Transmembrane</keyword>
<keyword id="KW-1133">Transmembrane helix</keyword>
<keyword id="KW-0813">Transport</keyword>
<sequence>MGIISFIFALAEDMLLAAIPAVGFAMVFNVPQRALRWCALLGAIGHGSRMIMMSAGFNIEWATFLAALLVGSIGIQWSRWYLAHPKIFTVAAVIPMFPGISAYTAMISAVKISHFGYSEEMMILLLSNFLKASSIVGALSIGLSIPGLWLYRKRPRV</sequence>
<organism>
    <name type="scientific">Klebsiella pneumoniae subsp. pneumoniae (strain ATCC 700721 / MGH 78578)</name>
    <dbReference type="NCBI Taxonomy" id="272620"/>
    <lineage>
        <taxon>Bacteria</taxon>
        <taxon>Pseudomonadati</taxon>
        <taxon>Pseudomonadota</taxon>
        <taxon>Gammaproteobacteria</taxon>
        <taxon>Enterobacterales</taxon>
        <taxon>Enterobacteriaceae</taxon>
        <taxon>Klebsiella/Raoultella group</taxon>
        <taxon>Klebsiella</taxon>
        <taxon>Klebsiella pneumoniae complex</taxon>
    </lineage>
</organism>
<protein>
    <recommendedName>
        <fullName evidence="1">Probable succinate transporter subunit YjjB</fullName>
    </recommendedName>
</protein>
<feature type="chain" id="PRO_1000065876" description="Probable succinate transporter subunit YjjB">
    <location>
        <begin position="1"/>
        <end position="157"/>
    </location>
</feature>
<feature type="transmembrane region" description="Helical" evidence="1">
    <location>
        <begin position="2"/>
        <end position="22"/>
    </location>
</feature>
<feature type="transmembrane region" description="Helical" evidence="1">
    <location>
        <begin position="55"/>
        <end position="75"/>
    </location>
</feature>
<feature type="transmembrane region" description="Helical" evidence="1">
    <location>
        <begin position="87"/>
        <end position="107"/>
    </location>
</feature>
<feature type="transmembrane region" description="Helical" evidence="1">
    <location>
        <begin position="129"/>
        <end position="149"/>
    </location>
</feature>
<comment type="function">
    <text evidence="1">Involved in succinate export with YjjP. Both proteins are required for export.</text>
</comment>
<comment type="subunit">
    <text evidence="1">The transporter is composed of YjjB and YjjP.</text>
</comment>
<comment type="subcellular location">
    <subcellularLocation>
        <location evidence="1">Cell inner membrane</location>
        <topology evidence="1">Multi-pass membrane protein</topology>
    </subcellularLocation>
</comment>
<comment type="similarity">
    <text evidence="1">Belongs to the ThrE exporter (TC 2.A.79) family.</text>
</comment>
<proteinExistence type="inferred from homology"/>
<name>YJJB_KLEP7</name>
<gene>
    <name evidence="1" type="primary">yjjB</name>
    <name type="ordered locus">KPN78578_47350</name>
    <name type="ORF">KPN_04813</name>
</gene>
<accession>A6THX5</accession>
<reference key="1">
    <citation type="submission" date="2006-09" db="EMBL/GenBank/DDBJ databases">
        <authorList>
            <consortium name="The Klebsiella pneumonia Genome Sequencing Project"/>
            <person name="McClelland M."/>
            <person name="Sanderson E.K."/>
            <person name="Spieth J."/>
            <person name="Clifton W.S."/>
            <person name="Latreille P."/>
            <person name="Sabo A."/>
            <person name="Pepin K."/>
            <person name="Bhonagiri V."/>
            <person name="Porwollik S."/>
            <person name="Ali J."/>
            <person name="Wilson R.K."/>
        </authorList>
    </citation>
    <scope>NUCLEOTIDE SEQUENCE [LARGE SCALE GENOMIC DNA]</scope>
    <source>
        <strain>ATCC 700721 / MGH 78578</strain>
    </source>
</reference>